<evidence type="ECO:0000305" key="1"/>
<organism>
    <name type="scientific">Pyrococcus horikoshii (strain ATCC 700860 / DSM 12428 / JCM 9974 / NBRC 100139 / OT-3)</name>
    <dbReference type="NCBI Taxonomy" id="70601"/>
    <lineage>
        <taxon>Archaea</taxon>
        <taxon>Methanobacteriati</taxon>
        <taxon>Methanobacteriota</taxon>
        <taxon>Thermococci</taxon>
        <taxon>Thermococcales</taxon>
        <taxon>Thermococcaceae</taxon>
        <taxon>Pyrococcus</taxon>
    </lineage>
</organism>
<feature type="chain" id="PRO_0000138501" description="UPF0145 protein PH1682">
    <location>
        <begin position="1"/>
        <end position="117"/>
    </location>
</feature>
<sequence>MKDMKTIEGIIVVTTPEIPGYKVVEVKGVARGGTVRATHIGRDIMALLRNLKGGEVKEYTEMMAEAREEALRRMALHAKELGANAVVNFRFATSNLGGSMAEIYAYGTAVVVERVEK</sequence>
<accession>O59319</accession>
<protein>
    <recommendedName>
        <fullName>UPF0145 protein PH1682</fullName>
    </recommendedName>
</protein>
<gene>
    <name type="ordered locus">PH1682</name>
</gene>
<dbReference type="EMBL" id="BA000001">
    <property type="protein sequence ID" value="BAA30794.1"/>
    <property type="molecule type" value="Genomic_DNA"/>
</dbReference>
<dbReference type="PIR" id="B71049">
    <property type="entry name" value="B71049"/>
</dbReference>
<dbReference type="SMR" id="O59319"/>
<dbReference type="EnsemblBacteria" id="BAA30794">
    <property type="protein sequence ID" value="BAA30794"/>
    <property type="gene ID" value="BAA30794"/>
</dbReference>
<dbReference type="KEGG" id="pho:PH1682"/>
<dbReference type="eggNOG" id="arCOG02287">
    <property type="taxonomic scope" value="Archaea"/>
</dbReference>
<dbReference type="Proteomes" id="UP000000752">
    <property type="component" value="Chromosome"/>
</dbReference>
<dbReference type="Gene3D" id="3.30.110.70">
    <property type="entry name" value="Hypothetical protein apc22750. Chain B"/>
    <property type="match status" value="1"/>
</dbReference>
<dbReference type="HAMAP" id="MF_00338">
    <property type="entry name" value="UPF0145"/>
    <property type="match status" value="1"/>
</dbReference>
<dbReference type="InterPro" id="IPR035439">
    <property type="entry name" value="UPF0145_dom_sf"/>
</dbReference>
<dbReference type="InterPro" id="IPR002765">
    <property type="entry name" value="UPF0145_YbjQ-like"/>
</dbReference>
<dbReference type="NCBIfam" id="NF002989">
    <property type="entry name" value="PRK03732.1"/>
    <property type="match status" value="1"/>
</dbReference>
<dbReference type="PANTHER" id="PTHR34068:SF2">
    <property type="entry name" value="UPF0145 PROTEIN SCO3412"/>
    <property type="match status" value="1"/>
</dbReference>
<dbReference type="PANTHER" id="PTHR34068">
    <property type="entry name" value="UPF0145 PROTEIN YBJQ"/>
    <property type="match status" value="1"/>
</dbReference>
<dbReference type="Pfam" id="PF01906">
    <property type="entry name" value="YbjQ_1"/>
    <property type="match status" value="1"/>
</dbReference>
<dbReference type="SUPFAM" id="SSF117782">
    <property type="entry name" value="YbjQ-like"/>
    <property type="match status" value="1"/>
</dbReference>
<comment type="similarity">
    <text evidence="1">Belongs to the UPF0145 family.</text>
</comment>
<proteinExistence type="inferred from homology"/>
<reference key="1">
    <citation type="journal article" date="1998" name="DNA Res.">
        <title>Complete sequence and gene organization of the genome of a hyper-thermophilic archaebacterium, Pyrococcus horikoshii OT3.</title>
        <authorList>
            <person name="Kawarabayasi Y."/>
            <person name="Sawada M."/>
            <person name="Horikawa H."/>
            <person name="Haikawa Y."/>
            <person name="Hino Y."/>
            <person name="Yamamoto S."/>
            <person name="Sekine M."/>
            <person name="Baba S."/>
            <person name="Kosugi H."/>
            <person name="Hosoyama A."/>
            <person name="Nagai Y."/>
            <person name="Sakai M."/>
            <person name="Ogura K."/>
            <person name="Otsuka R."/>
            <person name="Nakazawa H."/>
            <person name="Takamiya M."/>
            <person name="Ohfuku Y."/>
            <person name="Funahashi T."/>
            <person name="Tanaka T."/>
            <person name="Kudoh Y."/>
            <person name="Yamazaki J."/>
            <person name="Kushida N."/>
            <person name="Oguchi A."/>
            <person name="Aoki K."/>
            <person name="Yoshizawa T."/>
            <person name="Nakamura Y."/>
            <person name="Robb F.T."/>
            <person name="Horikoshi K."/>
            <person name="Masuchi Y."/>
            <person name="Shizuya H."/>
            <person name="Kikuchi H."/>
        </authorList>
    </citation>
    <scope>NUCLEOTIDE SEQUENCE [LARGE SCALE GENOMIC DNA]</scope>
    <source>
        <strain>ATCC 700860 / DSM 12428 / JCM 9974 / NBRC 100139 / OT-3</strain>
    </source>
</reference>
<name>Y1682_PYRHO</name>